<reference key="1">
    <citation type="journal article" date="2004" name="Proc. Natl. Acad. Sci. U.S.A.">
        <title>Complete genomes of two clinical Staphylococcus aureus strains: evidence for the rapid evolution of virulence and drug resistance.</title>
        <authorList>
            <person name="Holden M.T.G."/>
            <person name="Feil E.J."/>
            <person name="Lindsay J.A."/>
            <person name="Peacock S.J."/>
            <person name="Day N.P.J."/>
            <person name="Enright M.C."/>
            <person name="Foster T.J."/>
            <person name="Moore C.E."/>
            <person name="Hurst L."/>
            <person name="Atkin R."/>
            <person name="Barron A."/>
            <person name="Bason N."/>
            <person name="Bentley S.D."/>
            <person name="Chillingworth C."/>
            <person name="Chillingworth T."/>
            <person name="Churcher C."/>
            <person name="Clark L."/>
            <person name="Corton C."/>
            <person name="Cronin A."/>
            <person name="Doggett J."/>
            <person name="Dowd L."/>
            <person name="Feltwell T."/>
            <person name="Hance Z."/>
            <person name="Harris B."/>
            <person name="Hauser H."/>
            <person name="Holroyd S."/>
            <person name="Jagels K."/>
            <person name="James K.D."/>
            <person name="Lennard N."/>
            <person name="Line A."/>
            <person name="Mayes R."/>
            <person name="Moule S."/>
            <person name="Mungall K."/>
            <person name="Ormond D."/>
            <person name="Quail M.A."/>
            <person name="Rabbinowitsch E."/>
            <person name="Rutherford K.M."/>
            <person name="Sanders M."/>
            <person name="Sharp S."/>
            <person name="Simmonds M."/>
            <person name="Stevens K."/>
            <person name="Whitehead S."/>
            <person name="Barrell B.G."/>
            <person name="Spratt B.G."/>
            <person name="Parkhill J."/>
        </authorList>
    </citation>
    <scope>NUCLEOTIDE SEQUENCE [LARGE SCALE GENOMIC DNA]</scope>
    <source>
        <strain>MSSA476</strain>
    </source>
</reference>
<gene>
    <name evidence="1" type="primary">asnS</name>
    <name type="ordered locus">SAS1397</name>
</gene>
<protein>
    <recommendedName>
        <fullName evidence="1">Asparagine--tRNA ligase</fullName>
        <ecNumber evidence="1">6.1.1.22</ecNumber>
    </recommendedName>
    <alternativeName>
        <fullName evidence="1">Asparaginyl-tRNA synthetase</fullName>
        <shortName evidence="1">AsnRS</shortName>
    </alternativeName>
</protein>
<organism>
    <name type="scientific">Staphylococcus aureus (strain MSSA476)</name>
    <dbReference type="NCBI Taxonomy" id="282459"/>
    <lineage>
        <taxon>Bacteria</taxon>
        <taxon>Bacillati</taxon>
        <taxon>Bacillota</taxon>
        <taxon>Bacilli</taxon>
        <taxon>Bacillales</taxon>
        <taxon>Staphylococcaceae</taxon>
        <taxon>Staphylococcus</taxon>
    </lineage>
</organism>
<sequence length="430" mass="49186">MKTTIKQAKDHLNQDVTIGAWLTNKRSSGKIAFLQLRDGTGFMQGVVVKSEVDEEVFKLAKEITQESSLYVTGTITEDNRSDLGYEMQVKSIEVISEAHDYPITPKNHGTEFLMDHRHLWLRSKKQHAVMKIRNEVIRATYEFFNKDGFTKVDPPILTASAPEGTSELFHTKYFDQDAFLSQSGQLYLEAAAMAHGKVFSFGPTFRAEKSKTRRHLIEFWMIEGEMAFINHAESLEIQEQYVTHVVKSVLENCKLELKILERDTSKLEKVATPFPRISYDDAIEFLKSEGFDDIEWGEDFGAPHETAIANHYDLPVFITNYPTKIKPFYMQPNPENEETVLCADLIAPEGYGEIIGGSERVDDLELLEQRVKEHGLDEEAYSYYLDLRRYGSVPHCGFGLGLERTVAWISGVEHVRETAPFPRLLNRLYP</sequence>
<dbReference type="EC" id="6.1.1.22" evidence="1"/>
<dbReference type="EMBL" id="BX571857">
    <property type="protein sequence ID" value="CAG43173.1"/>
    <property type="molecule type" value="Genomic_DNA"/>
</dbReference>
<dbReference type="RefSeq" id="WP_000858784.1">
    <property type="nucleotide sequence ID" value="NC_002953.3"/>
</dbReference>
<dbReference type="SMR" id="Q6G9A8"/>
<dbReference type="KEGG" id="sas:SAS1397"/>
<dbReference type="HOGENOM" id="CLU_004553_2_0_9"/>
<dbReference type="GO" id="GO:0005737">
    <property type="term" value="C:cytoplasm"/>
    <property type="evidence" value="ECO:0007669"/>
    <property type="project" value="UniProtKB-SubCell"/>
</dbReference>
<dbReference type="GO" id="GO:0004816">
    <property type="term" value="F:asparagine-tRNA ligase activity"/>
    <property type="evidence" value="ECO:0007669"/>
    <property type="project" value="UniProtKB-UniRule"/>
</dbReference>
<dbReference type="GO" id="GO:0005524">
    <property type="term" value="F:ATP binding"/>
    <property type="evidence" value="ECO:0007669"/>
    <property type="project" value="UniProtKB-UniRule"/>
</dbReference>
<dbReference type="GO" id="GO:0140096">
    <property type="term" value="F:catalytic activity, acting on a protein"/>
    <property type="evidence" value="ECO:0007669"/>
    <property type="project" value="UniProtKB-ARBA"/>
</dbReference>
<dbReference type="GO" id="GO:0003676">
    <property type="term" value="F:nucleic acid binding"/>
    <property type="evidence" value="ECO:0007669"/>
    <property type="project" value="InterPro"/>
</dbReference>
<dbReference type="GO" id="GO:0016740">
    <property type="term" value="F:transferase activity"/>
    <property type="evidence" value="ECO:0007669"/>
    <property type="project" value="UniProtKB-ARBA"/>
</dbReference>
<dbReference type="GO" id="GO:0006421">
    <property type="term" value="P:asparaginyl-tRNA aminoacylation"/>
    <property type="evidence" value="ECO:0007669"/>
    <property type="project" value="UniProtKB-UniRule"/>
</dbReference>
<dbReference type="CDD" id="cd04323">
    <property type="entry name" value="AsnRS_cyto_like_N"/>
    <property type="match status" value="1"/>
</dbReference>
<dbReference type="CDD" id="cd00776">
    <property type="entry name" value="AsxRS_core"/>
    <property type="match status" value="1"/>
</dbReference>
<dbReference type="Gene3D" id="3.30.930.10">
    <property type="entry name" value="Bira Bifunctional Protein, Domain 2"/>
    <property type="match status" value="1"/>
</dbReference>
<dbReference type="Gene3D" id="2.40.50.140">
    <property type="entry name" value="Nucleic acid-binding proteins"/>
    <property type="match status" value="1"/>
</dbReference>
<dbReference type="HAMAP" id="MF_00534">
    <property type="entry name" value="Asn_tRNA_synth"/>
    <property type="match status" value="1"/>
</dbReference>
<dbReference type="InterPro" id="IPR004364">
    <property type="entry name" value="Aa-tRNA-synt_II"/>
</dbReference>
<dbReference type="InterPro" id="IPR006195">
    <property type="entry name" value="aa-tRNA-synth_II"/>
</dbReference>
<dbReference type="InterPro" id="IPR045864">
    <property type="entry name" value="aa-tRNA-synth_II/BPL/LPL"/>
</dbReference>
<dbReference type="InterPro" id="IPR004522">
    <property type="entry name" value="Asn-tRNA-ligase"/>
</dbReference>
<dbReference type="InterPro" id="IPR002312">
    <property type="entry name" value="Asp/Asn-tRNA-synth_IIb"/>
</dbReference>
<dbReference type="InterPro" id="IPR012340">
    <property type="entry name" value="NA-bd_OB-fold"/>
</dbReference>
<dbReference type="InterPro" id="IPR004365">
    <property type="entry name" value="NA-bd_OB_tRNA"/>
</dbReference>
<dbReference type="NCBIfam" id="TIGR00457">
    <property type="entry name" value="asnS"/>
    <property type="match status" value="1"/>
</dbReference>
<dbReference type="NCBIfam" id="NF003037">
    <property type="entry name" value="PRK03932.1"/>
    <property type="match status" value="1"/>
</dbReference>
<dbReference type="NCBIfam" id="NF003483">
    <property type="entry name" value="PRK05159.1"/>
    <property type="match status" value="1"/>
</dbReference>
<dbReference type="PANTHER" id="PTHR22594:SF34">
    <property type="entry name" value="ASPARAGINE--TRNA LIGASE, MITOCHONDRIAL-RELATED"/>
    <property type="match status" value="1"/>
</dbReference>
<dbReference type="PANTHER" id="PTHR22594">
    <property type="entry name" value="ASPARTYL/LYSYL-TRNA SYNTHETASE"/>
    <property type="match status" value="1"/>
</dbReference>
<dbReference type="Pfam" id="PF00152">
    <property type="entry name" value="tRNA-synt_2"/>
    <property type="match status" value="1"/>
</dbReference>
<dbReference type="Pfam" id="PF01336">
    <property type="entry name" value="tRNA_anti-codon"/>
    <property type="match status" value="1"/>
</dbReference>
<dbReference type="PRINTS" id="PR01042">
    <property type="entry name" value="TRNASYNTHASP"/>
</dbReference>
<dbReference type="SUPFAM" id="SSF55681">
    <property type="entry name" value="Class II aaRS and biotin synthetases"/>
    <property type="match status" value="1"/>
</dbReference>
<dbReference type="SUPFAM" id="SSF50249">
    <property type="entry name" value="Nucleic acid-binding proteins"/>
    <property type="match status" value="1"/>
</dbReference>
<dbReference type="PROSITE" id="PS50862">
    <property type="entry name" value="AA_TRNA_LIGASE_II"/>
    <property type="match status" value="1"/>
</dbReference>
<accession>Q6G9A8</accession>
<comment type="catalytic activity">
    <reaction evidence="1">
        <text>tRNA(Asn) + L-asparagine + ATP = L-asparaginyl-tRNA(Asn) + AMP + diphosphate + H(+)</text>
        <dbReference type="Rhea" id="RHEA:11180"/>
        <dbReference type="Rhea" id="RHEA-COMP:9659"/>
        <dbReference type="Rhea" id="RHEA-COMP:9674"/>
        <dbReference type="ChEBI" id="CHEBI:15378"/>
        <dbReference type="ChEBI" id="CHEBI:30616"/>
        <dbReference type="ChEBI" id="CHEBI:33019"/>
        <dbReference type="ChEBI" id="CHEBI:58048"/>
        <dbReference type="ChEBI" id="CHEBI:78442"/>
        <dbReference type="ChEBI" id="CHEBI:78515"/>
        <dbReference type="ChEBI" id="CHEBI:456215"/>
        <dbReference type="EC" id="6.1.1.22"/>
    </reaction>
</comment>
<comment type="subunit">
    <text evidence="1">Homodimer.</text>
</comment>
<comment type="subcellular location">
    <subcellularLocation>
        <location evidence="1">Cytoplasm</location>
    </subcellularLocation>
</comment>
<comment type="similarity">
    <text evidence="1">Belongs to the class-II aminoacyl-tRNA synthetase family.</text>
</comment>
<feature type="chain" id="PRO_0000176451" description="Asparagine--tRNA ligase">
    <location>
        <begin position="1"/>
        <end position="430"/>
    </location>
</feature>
<keyword id="KW-0030">Aminoacyl-tRNA synthetase</keyword>
<keyword id="KW-0067">ATP-binding</keyword>
<keyword id="KW-0963">Cytoplasm</keyword>
<keyword id="KW-0436">Ligase</keyword>
<keyword id="KW-0547">Nucleotide-binding</keyword>
<keyword id="KW-0648">Protein biosynthesis</keyword>
<evidence type="ECO:0000255" key="1">
    <source>
        <dbReference type="HAMAP-Rule" id="MF_00534"/>
    </source>
</evidence>
<name>SYN_STAAS</name>
<proteinExistence type="inferred from homology"/>